<organism>
    <name type="scientific">Staphylococcus aureus (strain JH9)</name>
    <dbReference type="NCBI Taxonomy" id="359786"/>
    <lineage>
        <taxon>Bacteria</taxon>
        <taxon>Bacillati</taxon>
        <taxon>Bacillota</taxon>
        <taxon>Bacilli</taxon>
        <taxon>Bacillales</taxon>
        <taxon>Staphylococcaceae</taxon>
        <taxon>Staphylococcus</taxon>
    </lineage>
</organism>
<gene>
    <name type="ordered locus">SaurJH9_1700</name>
</gene>
<accession>A5ITG7</accession>
<proteinExistence type="inferred from homology"/>
<sequence length="152" mass="17474">MMDNKDYKKFYLIREDVLPESVVKTLKIKDALKSDPTLSIYDAVKQFDLSRSAFYKYRETIFPVDDKMLDHREFTLILYVTDIVGMLARVLDVISKLELSVLTIHQSIPMEEKATITLSLNAKSKETSVEDVIGALRNLDYVSKVELISMSM</sequence>
<dbReference type="EMBL" id="CP000703">
    <property type="protein sequence ID" value="ABQ49490.1"/>
    <property type="molecule type" value="Genomic_DNA"/>
</dbReference>
<dbReference type="KEGG" id="saj:SaurJH9_1700"/>
<dbReference type="HOGENOM" id="CLU_128147_0_0_9"/>
<dbReference type="Gene3D" id="3.30.70.260">
    <property type="match status" value="1"/>
</dbReference>
<dbReference type="HAMAP" id="MF_00707">
    <property type="entry name" value="UPF0735"/>
    <property type="match status" value="1"/>
</dbReference>
<dbReference type="InterPro" id="IPR045865">
    <property type="entry name" value="ACT-like_dom_sf"/>
</dbReference>
<dbReference type="InterPro" id="IPR002912">
    <property type="entry name" value="ACT_dom"/>
</dbReference>
<dbReference type="InterPro" id="IPR008310">
    <property type="entry name" value="UPF0735_ACT_dom-cont"/>
</dbReference>
<dbReference type="NCBIfam" id="NF003361">
    <property type="entry name" value="PRK04435.1"/>
    <property type="match status" value="1"/>
</dbReference>
<dbReference type="PIRSF" id="PIRSF025624">
    <property type="entry name" value="ACT_PheB"/>
    <property type="match status" value="1"/>
</dbReference>
<dbReference type="SUPFAM" id="SSF55021">
    <property type="entry name" value="ACT-like"/>
    <property type="match status" value="1"/>
</dbReference>
<dbReference type="PROSITE" id="PS51671">
    <property type="entry name" value="ACT"/>
    <property type="match status" value="1"/>
</dbReference>
<comment type="similarity">
    <text evidence="1">Belongs to the UPF0735 family.</text>
</comment>
<protein>
    <recommendedName>
        <fullName evidence="1">UPF0735 ACT domain-containing protein SaurJH9_1700</fullName>
    </recommendedName>
</protein>
<feature type="chain" id="PRO_1000083196" description="UPF0735 ACT domain-containing protein SaurJH9_1700">
    <location>
        <begin position="1"/>
        <end position="152"/>
    </location>
</feature>
<feature type="domain" description="ACT" evidence="1">
    <location>
        <begin position="75"/>
        <end position="150"/>
    </location>
</feature>
<name>Y1700_STAA9</name>
<reference key="1">
    <citation type="submission" date="2007-05" db="EMBL/GenBank/DDBJ databases">
        <title>Complete sequence of chromosome of Staphylococcus aureus subsp. aureus JH9.</title>
        <authorList>
            <consortium name="US DOE Joint Genome Institute"/>
            <person name="Copeland A."/>
            <person name="Lucas S."/>
            <person name="Lapidus A."/>
            <person name="Barry K."/>
            <person name="Detter J.C."/>
            <person name="Glavina del Rio T."/>
            <person name="Hammon N."/>
            <person name="Israni S."/>
            <person name="Pitluck S."/>
            <person name="Chain P."/>
            <person name="Malfatti S."/>
            <person name="Shin M."/>
            <person name="Vergez L."/>
            <person name="Schmutz J."/>
            <person name="Larimer F."/>
            <person name="Land M."/>
            <person name="Hauser L."/>
            <person name="Kyrpides N."/>
            <person name="Kim E."/>
            <person name="Tomasz A."/>
            <person name="Richardson P."/>
        </authorList>
    </citation>
    <scope>NUCLEOTIDE SEQUENCE [LARGE SCALE GENOMIC DNA]</scope>
    <source>
        <strain>JH9</strain>
    </source>
</reference>
<evidence type="ECO:0000255" key="1">
    <source>
        <dbReference type="HAMAP-Rule" id="MF_00707"/>
    </source>
</evidence>